<protein>
    <recommendedName>
        <fullName evidence="4">Phenylalanine 3-hydroxylase</fullName>
        <shortName evidence="4">Phe3H</shortName>
        <ecNumber evidence="7">1.14.16.7</ecNumber>
    </recommendedName>
    <alternativeName>
        <fullName evidence="4">Fe-dependent phenylalanine hydroxylase</fullName>
    </alternativeName>
    <alternativeName>
        <fullName evidence="6">Phenylalanine 3-monooxygenase</fullName>
    </alternativeName>
</protein>
<organism>
    <name type="scientific">Streptomyces coeruleorubidus</name>
    <dbReference type="NCBI Taxonomy" id="116188"/>
    <lineage>
        <taxon>Bacteria</taxon>
        <taxon>Bacillati</taxon>
        <taxon>Actinomycetota</taxon>
        <taxon>Actinomycetes</taxon>
        <taxon>Kitasatosporales</taxon>
        <taxon>Streptomycetaceae</taxon>
        <taxon>Streptomyces</taxon>
    </lineage>
</organism>
<name>PH3H_STRC4</name>
<keyword id="KW-0408">Iron</keyword>
<keyword id="KW-0479">Metal-binding</keyword>
<keyword id="KW-0503">Monooxygenase</keyword>
<keyword id="KW-0560">Oxidoreductase</keyword>
<keyword id="KW-0585">Phenylalanine catabolism</keyword>
<proteinExistence type="evidence at protein level"/>
<reference key="1">
    <citation type="journal article" date="2010" name="ChemBioChem">
        <title>Pacidamycin biosynthesis: identification and heterologous expression of the first uridyl peptide antibiotic gene cluster.</title>
        <authorList>
            <person name="Rackham E.J."/>
            <person name="Gruschow S."/>
            <person name="Ragab A.E."/>
            <person name="Dickens S."/>
            <person name="Goss R.J."/>
        </authorList>
    </citation>
    <scope>NUCLEOTIDE SEQUENCE [GENOMIC DNA]</scope>
    <source>
        <strain evidence="8">AB1183F-64</strain>
    </source>
</reference>
<reference key="2">
    <citation type="journal article" date="2011" name="Chem. Sci.">
        <title>Diversity in natural product families is governed by more than enzyme promiscuity alone: establishing control of the pacidamycin portfolio.</title>
        <authorList>
            <person name="Gruschow S."/>
            <person name="Rackham E.J."/>
            <person name="Goss R.J.M."/>
        </authorList>
    </citation>
    <scope>NUCLEOTIDE SEQUENCE [GENOMIC DNA]</scope>
    <source>
        <strain evidence="8">AB1183F-64</strain>
    </source>
</reference>
<reference key="3">
    <citation type="journal article" date="2011" name="J. Am. Chem. Soc.">
        <title>Nine enzymes are required for assembly of the pacidamycin group of peptidyl nucleoside antibiotics.</title>
        <authorList>
            <person name="Zhang W."/>
            <person name="Ntai I."/>
            <person name="Bolla M.L."/>
            <person name="Malcolmson S.J."/>
            <person name="Kahne D."/>
            <person name="Kelleher N.L."/>
            <person name="Walsh C.T."/>
        </authorList>
    </citation>
    <scope>NUCLEOTIDE SEQUENCE [GENOMIC DNA]</scope>
</reference>
<reference key="4">
    <citation type="journal article" date="2011" name="Biochemistry">
        <title>Identification of phenylalanine 3-hydroxylase for meta-tyrosine biosynthesis.</title>
        <authorList>
            <person name="Zhang W."/>
            <person name="Ames B.D."/>
            <person name="Walsh C.T."/>
        </authorList>
    </citation>
    <scope>FUNCTION</scope>
    <scope>CATALYTIC ACTIVITY</scope>
    <scope>BIOPHYSICOCHEMICAL PROPERTIES</scope>
    <scope>COFACTOR</scope>
    <scope>MUTAGENESIS OF CYS-187 AND THR-202</scope>
    <scope>SUBSTRATE SPECIFICITY</scope>
    <source>
        <strain>NRRL 18370</strain>
    </source>
</reference>
<accession>F5BFC8</accession>
<gene>
    <name evidence="3" type="primary">pacX</name>
    <name evidence="5" type="synonym">phhA</name>
</gene>
<dbReference type="EC" id="1.14.16.7" evidence="7"/>
<dbReference type="EMBL" id="JN157766">
    <property type="protein sequence ID" value="AFK26599.1"/>
    <property type="molecule type" value="Genomic_DNA"/>
</dbReference>
<dbReference type="EMBL" id="HQ874646">
    <property type="protein sequence ID" value="AEB33695.1"/>
    <property type="molecule type" value="Genomic_DNA"/>
</dbReference>
<dbReference type="SMR" id="F5BFC8"/>
<dbReference type="KEGG" id="ag:AEB33695"/>
<dbReference type="BioCyc" id="MetaCyc:MONOMER-17528"/>
<dbReference type="BRENDA" id="1.14.16.7">
    <property type="organism ID" value="13389"/>
</dbReference>
<dbReference type="GO" id="GO:0005506">
    <property type="term" value="F:iron ion binding"/>
    <property type="evidence" value="ECO:0007669"/>
    <property type="project" value="InterPro"/>
</dbReference>
<dbReference type="GO" id="GO:0016714">
    <property type="term" value="F:oxidoreductase activity, acting on paired donors, with incorporation or reduction of molecular oxygen, reduced pteridine as one donor, and incorporation of one atom of oxygen"/>
    <property type="evidence" value="ECO:0007669"/>
    <property type="project" value="InterPro"/>
</dbReference>
<dbReference type="GO" id="GO:0006559">
    <property type="term" value="P:L-phenylalanine catabolic process"/>
    <property type="evidence" value="ECO:0007669"/>
    <property type="project" value="UniProtKB-KW"/>
</dbReference>
<dbReference type="Gene3D" id="1.10.800.10">
    <property type="entry name" value="Aromatic amino acid hydroxylase"/>
    <property type="match status" value="1"/>
</dbReference>
<dbReference type="InterPro" id="IPR001273">
    <property type="entry name" value="ArAA_hydroxylase"/>
</dbReference>
<dbReference type="InterPro" id="IPR036951">
    <property type="entry name" value="ArAA_hydroxylase_sf"/>
</dbReference>
<dbReference type="InterPro" id="IPR036329">
    <property type="entry name" value="Aro-AA_hydroxylase_C_sf"/>
</dbReference>
<dbReference type="InterPro" id="IPR019774">
    <property type="entry name" value="Aromatic-AA_hydroxylase_C"/>
</dbReference>
<dbReference type="NCBIfam" id="NF008877">
    <property type="entry name" value="PRK11913.1-2"/>
    <property type="match status" value="1"/>
</dbReference>
<dbReference type="PANTHER" id="PTHR11473">
    <property type="entry name" value="AROMATIC AMINO ACID HYDROXYLASE"/>
    <property type="match status" value="1"/>
</dbReference>
<dbReference type="PANTHER" id="PTHR11473:SF24">
    <property type="entry name" value="PHENYLALANINE-4-HYDROXYLASE"/>
    <property type="match status" value="1"/>
</dbReference>
<dbReference type="Pfam" id="PF00351">
    <property type="entry name" value="Biopterin_H"/>
    <property type="match status" value="1"/>
</dbReference>
<dbReference type="PRINTS" id="PR00372">
    <property type="entry name" value="FYWHYDRXLASE"/>
</dbReference>
<dbReference type="SUPFAM" id="SSF56534">
    <property type="entry name" value="Aromatic aminoacid monoxygenases, catalytic and oligomerization domains"/>
    <property type="match status" value="1"/>
</dbReference>
<dbReference type="PROSITE" id="PS51410">
    <property type="entry name" value="BH4_AAA_HYDROXYL_2"/>
    <property type="match status" value="1"/>
</dbReference>
<feature type="chain" id="PRO_0000445425" description="Phenylalanine 3-hydroxylase">
    <location>
        <begin position="1"/>
        <end position="279"/>
    </location>
</feature>
<feature type="binding site" evidence="1">
    <location>
        <position position="140"/>
    </location>
    <ligand>
        <name>Fe cation</name>
        <dbReference type="ChEBI" id="CHEBI:24875"/>
    </ligand>
</feature>
<feature type="binding site" evidence="1">
    <location>
        <position position="145"/>
    </location>
    <ligand>
        <name>Fe cation</name>
        <dbReference type="ChEBI" id="CHEBI:24875"/>
    </ligand>
</feature>
<feature type="binding site" evidence="1">
    <location>
        <position position="186"/>
    </location>
    <ligand>
        <name>Fe cation</name>
        <dbReference type="ChEBI" id="CHEBI:24875"/>
    </ligand>
</feature>
<feature type="site" description="Important for the regiospecific hydroxylation of the phenyl ring" evidence="2">
    <location>
        <position position="187"/>
    </location>
</feature>
<feature type="site" description="Important for the regiospecific hydroxylation of the phenyl ring" evidence="2">
    <location>
        <position position="202"/>
    </location>
</feature>
<feature type="mutagenesis site" description="Loss of hydroxylase activity. Only a small amount of 3-hydroxy-L-phenylalanine (meta-Tyr) is formed; when associated with G-202." evidence="2">
    <original>C</original>
    <variation>F</variation>
    <location>
        <position position="187"/>
    </location>
</feature>
<feature type="mutagenesis site" description="60-fold increase in the preference for 4-hydroxy-L-phenylalanine (para-Tyr) over 3-hydroxy-L-phenylalanine (meta-Tyr) formation. Only a small amount of 3-hydroxy-L-phenylalanine (meta-Tyr) is formed; when associated with F-187." evidence="2">
    <original>T</original>
    <variation>G</variation>
    <location>
        <position position="202"/>
    </location>
</feature>
<evidence type="ECO:0000250" key="1">
    <source>
        <dbReference type="UniProtKB" id="P04176"/>
    </source>
</evidence>
<evidence type="ECO:0000269" key="2">
    <source>
    </source>
</evidence>
<evidence type="ECO:0000303" key="3">
    <source>
    </source>
</evidence>
<evidence type="ECO:0000303" key="4">
    <source>
    </source>
</evidence>
<evidence type="ECO:0000303" key="5">
    <source ref="2"/>
</evidence>
<evidence type="ECO:0000305" key="6"/>
<evidence type="ECO:0000305" key="7">
    <source>
    </source>
</evidence>
<evidence type="ECO:0000312" key="8">
    <source>
        <dbReference type="EMBL" id="AFK26599.1"/>
    </source>
</evidence>
<sequence>MQGPHAQMTDAAYEIRRSEIAALSTDLAPEDPIPVVEYTEWEHEVWRTVCVDLTARHRTDAAAEYLESAEQLAVPLDHVPQLRDVSGRLGSISGFTFQSAPALVPLREFCGGLANSVFHSTQYLRHPRSPFYTEDPDLLHDLVGHGNVLASDRFARLYRLAGNAAARVHSTEALQFIGKVFWFTLECGVVRERGERKAYGATLVSSYGELDHFRSADFRPLDIKSLADVEYDISTYQPILFEADSMDEVEDTVGSFWDTCDDDSIAALLGGTSRSVTPH</sequence>
<comment type="function">
    <text evidence="2">In vitro, catalyzes the highly regiospecific C-3 hydroxylation of L-phenylalanine (L-Phe) to yield 3-hydroxy-L-phenylalanine (meta-Tyr), an amino acid found in bacterial secondary metabolites such as sanglifehrin A and some pacidamycins. Tetrahydrobiopterin (BH4) seems to be the physiological pterin, however the hydroxylase is also able to use 6-methyltetrahydropterin (6-MePH4).</text>
</comment>
<comment type="catalytic activity">
    <reaction evidence="7">
        <text>(6R)-L-erythro-5,6,7,8-tetrahydrobiopterin + L-phenylalanine + O2 = 3-hydroxy-L-phenylalanine + (4aS,6R)-4a-hydroxy-L-erythro-5,6,7,8-tetrahydrobiopterin</text>
        <dbReference type="Rhea" id="RHEA:41532"/>
        <dbReference type="ChEBI" id="CHEBI:15379"/>
        <dbReference type="ChEBI" id="CHEBI:15642"/>
        <dbReference type="ChEBI" id="CHEBI:58095"/>
        <dbReference type="ChEBI" id="CHEBI:59560"/>
        <dbReference type="ChEBI" id="CHEBI:78290"/>
        <dbReference type="EC" id="1.14.16.7"/>
    </reaction>
</comment>
<comment type="cofactor">
    <cofactor evidence="2">
        <name>Fe(2+)</name>
        <dbReference type="ChEBI" id="CHEBI:29033"/>
    </cofactor>
</comment>
<comment type="biophysicochemical properties">
    <kinetics>
        <KM evidence="2">1.1 mM for L-phenylalanine</KM>
        <KM evidence="2">26 uM for 6-methyltetrahydropterin</KM>
        <text evidence="2">kcat is 1.3 min(-1) for L-phenylalanine as substrate. kcat is 1.2 min(-1) for 6-methyltetrahydropterin as substrate.</text>
    </kinetics>
    <phDependence>
        <text evidence="2">Optimum pH is 6, and the enzyme tends to precipitate gradually below pH 6.5.</text>
    </phDependence>
</comment>
<comment type="similarity">
    <text evidence="6">Belongs to the biopterin-dependent aromatic amino acid hydroxylase family.</text>
</comment>